<evidence type="ECO:0000250" key="1"/>
<evidence type="ECO:0000250" key="2">
    <source>
        <dbReference type="UniProtKB" id="P01236"/>
    </source>
</evidence>
<evidence type="ECO:0000250" key="3">
    <source>
        <dbReference type="UniProtKB" id="P01239"/>
    </source>
</evidence>
<evidence type="ECO:0000305" key="4"/>
<proteinExistence type="evidence at transcript level"/>
<comment type="function">
    <text>Prolactin acts primarily on the mammary gland by promoting lactation.</text>
</comment>
<comment type="subunit">
    <text evidence="2">Interacts with PRLR.</text>
</comment>
<comment type="subcellular location">
    <subcellularLocation>
        <location>Secreted</location>
    </subcellularLocation>
</comment>
<comment type="similarity">
    <text evidence="4">Belongs to the somatotropin/prolactin family.</text>
</comment>
<reference key="1">
    <citation type="journal article" date="1996" name="J. Mol. Endocrinol.">
        <title>Cloning of rabbit prolactin cDNA and prolactin gene expression in the rabbit mammary gland.</title>
        <authorList>
            <person name="Gabou L."/>
            <person name="Boisnard M."/>
            <person name="Gourdou I."/>
            <person name="Jammes M."/>
            <person name="Dulor J.P."/>
            <person name="Djiane J."/>
        </authorList>
    </citation>
    <scope>NUCLEOTIDE SEQUENCE [MRNA]</scope>
    <source>
        <strain>New Zealand white</strain>
    </source>
</reference>
<reference key="2">
    <citation type="journal article" date="1997" name="Proteins">
        <title>Homology modeling of rabbit prolactin hormone complexed with its receptor.</title>
        <authorList>
            <person name="Halaby D."/>
            <person name="Thoreau E."/>
            <person name="Djiane J."/>
            <person name="Mornon J.-P."/>
        </authorList>
    </citation>
    <scope>3D-STRUCTURE MODELING</scope>
</reference>
<organism>
    <name type="scientific">Oryctolagus cuniculus</name>
    <name type="common">Rabbit</name>
    <dbReference type="NCBI Taxonomy" id="9986"/>
    <lineage>
        <taxon>Eukaryota</taxon>
        <taxon>Metazoa</taxon>
        <taxon>Chordata</taxon>
        <taxon>Craniata</taxon>
        <taxon>Vertebrata</taxon>
        <taxon>Euteleostomi</taxon>
        <taxon>Mammalia</taxon>
        <taxon>Eutheria</taxon>
        <taxon>Euarchontoglires</taxon>
        <taxon>Glires</taxon>
        <taxon>Lagomorpha</taxon>
        <taxon>Leporidae</taxon>
        <taxon>Oryctolagus</taxon>
    </lineage>
</organism>
<gene>
    <name type="primary">PRL</name>
</gene>
<feature type="signal peptide" evidence="1">
    <location>
        <begin position="1"/>
        <end position="28"/>
    </location>
</feature>
<feature type="chain" id="PRO_0000032924" description="Prolactin">
    <location>
        <begin position="29"/>
        <end position="227"/>
    </location>
</feature>
<feature type="modified residue" description="Phosphoserine" evidence="3">
    <location>
        <position position="54"/>
    </location>
</feature>
<feature type="modified residue" description="Phosphoserine" evidence="3">
    <location>
        <position position="62"/>
    </location>
</feature>
<feature type="modified residue" description="Phosphoserine" evidence="3">
    <location>
        <position position="118"/>
    </location>
</feature>
<feature type="disulfide bond" evidence="1">
    <location>
        <begin position="32"/>
        <end position="39"/>
    </location>
</feature>
<feature type="disulfide bond" evidence="1">
    <location>
        <begin position="86"/>
        <end position="202"/>
    </location>
</feature>
<feature type="disulfide bond" evidence="1">
    <location>
        <begin position="219"/>
        <end position="227"/>
    </location>
</feature>
<dbReference type="EMBL" id="U27199">
    <property type="protein sequence ID" value="AAB17481.1"/>
    <property type="molecule type" value="mRNA"/>
</dbReference>
<dbReference type="RefSeq" id="NP_001076144.1">
    <property type="nucleotide sequence ID" value="NM_001082675.1"/>
</dbReference>
<dbReference type="SMR" id="Q28632"/>
<dbReference type="BioGRID" id="1172414">
    <property type="interactions" value="1"/>
</dbReference>
<dbReference type="FunCoup" id="Q28632">
    <property type="interactions" value="50"/>
</dbReference>
<dbReference type="STRING" id="9986.ENSOCUP00000001120"/>
<dbReference type="PaxDb" id="9986-ENSOCUP00000001120"/>
<dbReference type="GeneID" id="100009394"/>
<dbReference type="KEGG" id="ocu:100009394"/>
<dbReference type="CTD" id="5617"/>
<dbReference type="eggNOG" id="ENOG502QYU3">
    <property type="taxonomic scope" value="Eukaryota"/>
</dbReference>
<dbReference type="InParanoid" id="Q28632"/>
<dbReference type="OrthoDB" id="9946219at2759"/>
<dbReference type="Proteomes" id="UP000001811">
    <property type="component" value="Unplaced"/>
</dbReference>
<dbReference type="GO" id="GO:0005615">
    <property type="term" value="C:extracellular space"/>
    <property type="evidence" value="ECO:0007669"/>
    <property type="project" value="TreeGrafter"/>
</dbReference>
<dbReference type="GO" id="GO:0005179">
    <property type="term" value="F:hormone activity"/>
    <property type="evidence" value="ECO:0007669"/>
    <property type="project" value="UniProtKB-KW"/>
</dbReference>
<dbReference type="GO" id="GO:0005148">
    <property type="term" value="F:prolactin receptor binding"/>
    <property type="evidence" value="ECO:0007669"/>
    <property type="project" value="TreeGrafter"/>
</dbReference>
<dbReference type="GO" id="GO:0007565">
    <property type="term" value="P:female pregnancy"/>
    <property type="evidence" value="ECO:0007669"/>
    <property type="project" value="TreeGrafter"/>
</dbReference>
<dbReference type="GO" id="GO:0007595">
    <property type="term" value="P:lactation"/>
    <property type="evidence" value="ECO:0007669"/>
    <property type="project" value="UniProtKB-KW"/>
</dbReference>
<dbReference type="GO" id="GO:0008284">
    <property type="term" value="P:positive regulation of cell population proliferation"/>
    <property type="evidence" value="ECO:0007669"/>
    <property type="project" value="TreeGrafter"/>
</dbReference>
<dbReference type="GO" id="GO:1903489">
    <property type="term" value="P:positive regulation of lactation"/>
    <property type="evidence" value="ECO:0007669"/>
    <property type="project" value="TreeGrafter"/>
</dbReference>
<dbReference type="GO" id="GO:0046427">
    <property type="term" value="P:positive regulation of receptor signaling pathway via JAK-STAT"/>
    <property type="evidence" value="ECO:0007669"/>
    <property type="project" value="TreeGrafter"/>
</dbReference>
<dbReference type="GO" id="GO:0031667">
    <property type="term" value="P:response to nutrient levels"/>
    <property type="evidence" value="ECO:0007669"/>
    <property type="project" value="TreeGrafter"/>
</dbReference>
<dbReference type="CDD" id="cd10288">
    <property type="entry name" value="prolactin_like"/>
    <property type="match status" value="1"/>
</dbReference>
<dbReference type="FunFam" id="1.20.1250.10:FF:000003">
    <property type="entry name" value="Prolactin"/>
    <property type="match status" value="1"/>
</dbReference>
<dbReference type="Gene3D" id="1.20.1250.10">
    <property type="match status" value="1"/>
</dbReference>
<dbReference type="InterPro" id="IPR009079">
    <property type="entry name" value="4_helix_cytokine-like_core"/>
</dbReference>
<dbReference type="InterPro" id="IPR001400">
    <property type="entry name" value="Somatotropin/Prolactin"/>
</dbReference>
<dbReference type="InterPro" id="IPR018116">
    <property type="entry name" value="Somatotropin_CS"/>
</dbReference>
<dbReference type="PANTHER" id="PTHR11417:SF5">
    <property type="entry name" value="PROLACTIN"/>
    <property type="match status" value="1"/>
</dbReference>
<dbReference type="PANTHER" id="PTHR11417">
    <property type="entry name" value="SOMATOTROPIN,PROLACTIN"/>
    <property type="match status" value="1"/>
</dbReference>
<dbReference type="Pfam" id="PF00103">
    <property type="entry name" value="Hormone_1"/>
    <property type="match status" value="1"/>
</dbReference>
<dbReference type="PRINTS" id="PR00836">
    <property type="entry name" value="SOMATOTROPIN"/>
</dbReference>
<dbReference type="SUPFAM" id="SSF47266">
    <property type="entry name" value="4-helical cytokines"/>
    <property type="match status" value="1"/>
</dbReference>
<dbReference type="PROSITE" id="PS00266">
    <property type="entry name" value="SOMATOTROPIN_1"/>
    <property type="match status" value="1"/>
</dbReference>
<dbReference type="PROSITE" id="PS00338">
    <property type="entry name" value="SOMATOTROPIN_2"/>
    <property type="match status" value="1"/>
</dbReference>
<keyword id="KW-1015">Disulfide bond</keyword>
<keyword id="KW-0372">Hormone</keyword>
<keyword id="KW-0421">Lactation</keyword>
<keyword id="KW-0597">Phosphoprotein</keyword>
<keyword id="KW-1185">Reference proteome</keyword>
<keyword id="KW-0964">Secreted</keyword>
<keyword id="KW-0732">Signal</keyword>
<sequence>MDSKWSRRTGSLLLLLVSNLLLCKSTASLPICPSGAVNCQVSLRDLFDRAVILSHHIHKLSSEMFNEFDKRYTQGRGFITKAINSCHTSSLSTPEDKEQAQQIHHEDLLNMVLRVLPSWNDPLYHLVTEVRGMQEAPDAILSKAIEIEEQNRRLLEGMEKIVGQVHPGIKENEIYSVWSGLPSLQMADEDARLFAFYNLLHCLRRDSHKIDNYLKLLKCRIIYDSNC</sequence>
<protein>
    <recommendedName>
        <fullName>Prolactin</fullName>
        <shortName>PRL</shortName>
    </recommendedName>
</protein>
<name>PRL_RABIT</name>
<accession>Q28632</accession>